<name>RL15_BURTA</name>
<accession>Q2SU46</accession>
<protein>
    <recommendedName>
        <fullName evidence="1">Large ribosomal subunit protein uL15</fullName>
    </recommendedName>
    <alternativeName>
        <fullName evidence="3">50S ribosomal protein L15</fullName>
    </alternativeName>
</protein>
<comment type="function">
    <text evidence="1">Binds to the 23S rRNA.</text>
</comment>
<comment type="subunit">
    <text evidence="1">Part of the 50S ribosomal subunit.</text>
</comment>
<comment type="similarity">
    <text evidence="1">Belongs to the universal ribosomal protein uL15 family.</text>
</comment>
<keyword id="KW-0687">Ribonucleoprotein</keyword>
<keyword id="KW-0689">Ribosomal protein</keyword>
<keyword id="KW-0694">RNA-binding</keyword>
<keyword id="KW-0699">rRNA-binding</keyword>
<proteinExistence type="inferred from homology"/>
<dbReference type="EMBL" id="CP000086">
    <property type="protein sequence ID" value="ABC37704.1"/>
    <property type="molecule type" value="Genomic_DNA"/>
</dbReference>
<dbReference type="RefSeq" id="WP_009888412.1">
    <property type="nucleotide sequence ID" value="NZ_CP008786.1"/>
</dbReference>
<dbReference type="SMR" id="Q2SU46"/>
<dbReference type="GeneID" id="45122737"/>
<dbReference type="KEGG" id="bte:BTH_I3049"/>
<dbReference type="HOGENOM" id="CLU_055188_4_2_4"/>
<dbReference type="Proteomes" id="UP000001930">
    <property type="component" value="Chromosome I"/>
</dbReference>
<dbReference type="GO" id="GO:0022625">
    <property type="term" value="C:cytosolic large ribosomal subunit"/>
    <property type="evidence" value="ECO:0007669"/>
    <property type="project" value="TreeGrafter"/>
</dbReference>
<dbReference type="GO" id="GO:0019843">
    <property type="term" value="F:rRNA binding"/>
    <property type="evidence" value="ECO:0007669"/>
    <property type="project" value="UniProtKB-UniRule"/>
</dbReference>
<dbReference type="GO" id="GO:0003735">
    <property type="term" value="F:structural constituent of ribosome"/>
    <property type="evidence" value="ECO:0007669"/>
    <property type="project" value="InterPro"/>
</dbReference>
<dbReference type="GO" id="GO:0006412">
    <property type="term" value="P:translation"/>
    <property type="evidence" value="ECO:0007669"/>
    <property type="project" value="UniProtKB-UniRule"/>
</dbReference>
<dbReference type="Gene3D" id="3.100.10.10">
    <property type="match status" value="1"/>
</dbReference>
<dbReference type="HAMAP" id="MF_01341">
    <property type="entry name" value="Ribosomal_uL15"/>
    <property type="match status" value="1"/>
</dbReference>
<dbReference type="InterPro" id="IPR030878">
    <property type="entry name" value="Ribosomal_uL15"/>
</dbReference>
<dbReference type="InterPro" id="IPR021131">
    <property type="entry name" value="Ribosomal_uL15/eL18"/>
</dbReference>
<dbReference type="InterPro" id="IPR036227">
    <property type="entry name" value="Ribosomal_uL15/eL18_sf"/>
</dbReference>
<dbReference type="InterPro" id="IPR005749">
    <property type="entry name" value="Ribosomal_uL15_bac-type"/>
</dbReference>
<dbReference type="InterPro" id="IPR001196">
    <property type="entry name" value="Ribosomal_uL15_CS"/>
</dbReference>
<dbReference type="NCBIfam" id="TIGR01071">
    <property type="entry name" value="rplO_bact"/>
    <property type="match status" value="1"/>
</dbReference>
<dbReference type="PANTHER" id="PTHR12934">
    <property type="entry name" value="50S RIBOSOMAL PROTEIN L15"/>
    <property type="match status" value="1"/>
</dbReference>
<dbReference type="PANTHER" id="PTHR12934:SF11">
    <property type="entry name" value="LARGE RIBOSOMAL SUBUNIT PROTEIN UL15M"/>
    <property type="match status" value="1"/>
</dbReference>
<dbReference type="Pfam" id="PF00828">
    <property type="entry name" value="Ribosomal_L27A"/>
    <property type="match status" value="1"/>
</dbReference>
<dbReference type="SUPFAM" id="SSF52080">
    <property type="entry name" value="Ribosomal proteins L15p and L18e"/>
    <property type="match status" value="1"/>
</dbReference>
<dbReference type="PROSITE" id="PS00475">
    <property type="entry name" value="RIBOSOMAL_L15"/>
    <property type="match status" value="1"/>
</dbReference>
<gene>
    <name evidence="1" type="primary">rplO</name>
    <name type="ordered locus">BTH_I3049</name>
</gene>
<sequence length="144" mass="15110">MELNNLKPAEGAKHAKRRVGRGIGSGLGKTAGRGHKGQKSRSGGFHKVGFEGGQMPLQRRLPKRGFTSLTKEFVGEVRLGDLEKLPVDEVDLLALKQAGLVGELTKSAKIIATGELKRKIVVKGLGATKGARAAIEAAGGSFAE</sequence>
<feature type="chain" id="PRO_0000251496" description="Large ribosomal subunit protein uL15">
    <location>
        <begin position="1"/>
        <end position="144"/>
    </location>
</feature>
<feature type="region of interest" description="Disordered" evidence="2">
    <location>
        <begin position="1"/>
        <end position="59"/>
    </location>
</feature>
<feature type="compositionally biased region" description="Gly residues" evidence="2">
    <location>
        <begin position="21"/>
        <end position="31"/>
    </location>
</feature>
<reference key="1">
    <citation type="journal article" date="2005" name="BMC Genomics">
        <title>Bacterial genome adaptation to niches: divergence of the potential virulence genes in three Burkholderia species of different survival strategies.</title>
        <authorList>
            <person name="Kim H.S."/>
            <person name="Schell M.A."/>
            <person name="Yu Y."/>
            <person name="Ulrich R.L."/>
            <person name="Sarria S.H."/>
            <person name="Nierman W.C."/>
            <person name="DeShazer D."/>
        </authorList>
    </citation>
    <scope>NUCLEOTIDE SEQUENCE [LARGE SCALE GENOMIC DNA]</scope>
    <source>
        <strain>ATCC 700388 / DSM 13276 / CCUG 48851 / CIP 106301 / E264</strain>
    </source>
</reference>
<organism>
    <name type="scientific">Burkholderia thailandensis (strain ATCC 700388 / DSM 13276 / CCUG 48851 / CIP 106301 / E264)</name>
    <dbReference type="NCBI Taxonomy" id="271848"/>
    <lineage>
        <taxon>Bacteria</taxon>
        <taxon>Pseudomonadati</taxon>
        <taxon>Pseudomonadota</taxon>
        <taxon>Betaproteobacteria</taxon>
        <taxon>Burkholderiales</taxon>
        <taxon>Burkholderiaceae</taxon>
        <taxon>Burkholderia</taxon>
        <taxon>pseudomallei group</taxon>
    </lineage>
</organism>
<evidence type="ECO:0000255" key="1">
    <source>
        <dbReference type="HAMAP-Rule" id="MF_01341"/>
    </source>
</evidence>
<evidence type="ECO:0000256" key="2">
    <source>
        <dbReference type="SAM" id="MobiDB-lite"/>
    </source>
</evidence>
<evidence type="ECO:0000305" key="3"/>